<gene>
    <name evidence="2" type="primary">gB</name>
    <name type="ORF">BALF4</name>
</gene>
<feature type="signal peptide" evidence="2">
    <location>
        <begin position="1"/>
        <end position="21"/>
    </location>
</feature>
<feature type="chain" id="PRO_0000038190" description="Envelope glycoprotein B" evidence="2">
    <location>
        <begin position="22"/>
        <end position="857"/>
    </location>
</feature>
<feature type="topological domain" description="Virion surface" evidence="2">
    <location>
        <begin position="22"/>
        <end position="732"/>
    </location>
</feature>
<feature type="transmembrane region" description="Helical" evidence="2">
    <location>
        <begin position="733"/>
        <end position="753"/>
    </location>
</feature>
<feature type="topological domain" description="Intravirion" evidence="2">
    <location>
        <begin position="754"/>
        <end position="857"/>
    </location>
</feature>
<feature type="region of interest" description="Involved in fusion and/or binding to host membrane" evidence="2">
    <location>
        <begin position="108"/>
        <end position="114"/>
    </location>
</feature>
<feature type="region of interest" description="Involved in fusion and/or binding to host membrane" evidence="2">
    <location>
        <begin position="192"/>
        <end position="200"/>
    </location>
</feature>
<feature type="region of interest" description="Disordered" evidence="3">
    <location>
        <begin position="398"/>
        <end position="453"/>
    </location>
</feature>
<feature type="region of interest" description="Oligomerization">
    <location>
        <begin position="561"/>
        <end position="620"/>
    </location>
</feature>
<feature type="region of interest" description="Hydrophobic membrane proximal region" evidence="2">
    <location>
        <begin position="678"/>
        <end position="730"/>
    </location>
</feature>
<feature type="region of interest" description="Hydrophobic membrane proximal region">
    <location>
        <begin position="709"/>
        <end position="729"/>
    </location>
</feature>
<feature type="region of interest" description="Disordered" evidence="3">
    <location>
        <begin position="832"/>
        <end position="857"/>
    </location>
</feature>
<feature type="compositionally biased region" description="Pro residues" evidence="3">
    <location>
        <begin position="404"/>
        <end position="415"/>
    </location>
</feature>
<feature type="compositionally biased region" description="Low complexity" evidence="3">
    <location>
        <begin position="416"/>
        <end position="425"/>
    </location>
</feature>
<feature type="compositionally biased region" description="Low complexity" evidence="3">
    <location>
        <begin position="845"/>
        <end position="857"/>
    </location>
</feature>
<feature type="site" description="Cleavage; by host furin" evidence="1">
    <location>
        <begin position="432"/>
        <end position="433"/>
    </location>
</feature>
<feature type="glycosylation site" description="N-linked (GlcNAc...) asparagine; by host" evidence="2">
    <location>
        <position position="76"/>
    </location>
</feature>
<feature type="glycosylation site" description="N-linked (GlcNAc...) asparagine; by host" evidence="2 5">
    <location>
        <position position="163"/>
    </location>
</feature>
<feature type="glycosylation site" description="N-linked (GlcNAc...) asparagine; by host" evidence="2 5">
    <location>
        <position position="290"/>
    </location>
</feature>
<feature type="glycosylation site" description="N-linked (GlcNAc...) asparagine; by host" evidence="2">
    <location>
        <position position="329"/>
    </location>
</feature>
<feature type="glycosylation site" description="N-linked (GlcNAc...) asparagine; by host" evidence="2">
    <location>
        <position position="348"/>
    </location>
</feature>
<feature type="glycosylation site" description="N-linked (GlcNAc...) asparagine; by host" evidence="2">
    <location>
        <position position="395"/>
    </location>
</feature>
<feature type="glycosylation site" description="N-linked (GlcNAc...) asparagine; by host" evidence="2">
    <location>
        <position position="436"/>
    </location>
</feature>
<feature type="glycosylation site" description="N-linked (GlcNAc...) asparagine; by host" evidence="2">
    <location>
        <position position="563"/>
    </location>
</feature>
<feature type="glycosylation site" description="N-linked (GlcNAc...) asparagine; by host" evidence="2 5">
    <location>
        <position position="629"/>
    </location>
</feature>
<feature type="disulfide bond" evidence="2 5 9">
    <location>
        <begin position="51"/>
        <end position="528"/>
    </location>
</feature>
<feature type="disulfide bond" evidence="2 5 9">
    <location>
        <begin position="68"/>
        <end position="484"/>
    </location>
</feature>
<feature type="disulfide bond" evidence="2 5 9">
    <location>
        <begin position="141"/>
        <end position="206"/>
    </location>
</feature>
<feature type="disulfide bond" evidence="2 5 9">
    <location>
        <begin position="295"/>
        <end position="342"/>
    </location>
</feature>
<feature type="disulfide bond" evidence="2">
    <location>
        <begin position="551"/>
        <end position="588"/>
    </location>
</feature>
<feature type="mutagenesis site" description="Loss of fusion with epithelial cells." evidence="4">
    <original>WY</original>
    <variation>HR</variation>
    <location>
        <begin position="112"/>
        <end position="113"/>
    </location>
</feature>
<feature type="mutagenesis site" description="Loss of fusion with epithelial cells." evidence="4">
    <original>WLIW</original>
    <variation>RVEA</variation>
    <location>
        <begin position="193"/>
        <end position="196"/>
    </location>
</feature>
<feature type="mutagenesis site" description="Complete loss of proteolytic cleavage." evidence="4">
    <original>RRRRR</original>
    <variation>DDDDK</variation>
    <location>
        <begin position="428"/>
        <end position="432"/>
    </location>
</feature>
<feature type="strand" evidence="10">
    <location>
        <begin position="58"/>
        <end position="60"/>
    </location>
</feature>
<feature type="strand" evidence="10">
    <location>
        <begin position="77"/>
        <end position="87"/>
    </location>
</feature>
<feature type="strand" evidence="10">
    <location>
        <begin position="92"/>
        <end position="110"/>
    </location>
</feature>
<feature type="strand" evidence="10">
    <location>
        <begin position="115"/>
        <end position="125"/>
    </location>
</feature>
<feature type="helix" evidence="10">
    <location>
        <begin position="129"/>
        <end position="135"/>
    </location>
</feature>
<feature type="turn" evidence="10">
    <location>
        <begin position="136"/>
        <end position="138"/>
    </location>
</feature>
<feature type="strand" evidence="10">
    <location>
        <begin position="140"/>
        <end position="149"/>
    </location>
</feature>
<feature type="strand" evidence="10">
    <location>
        <begin position="152"/>
        <end position="157"/>
    </location>
</feature>
<feature type="helix" evidence="10">
    <location>
        <begin position="158"/>
        <end position="160"/>
    </location>
</feature>
<feature type="strand" evidence="10">
    <location>
        <begin position="165"/>
        <end position="167"/>
    </location>
</feature>
<feature type="strand" evidence="10">
    <location>
        <begin position="179"/>
        <end position="183"/>
    </location>
</feature>
<feature type="strand" evidence="10">
    <location>
        <begin position="197"/>
        <end position="215"/>
    </location>
</feature>
<feature type="strand" evidence="10">
    <location>
        <begin position="222"/>
        <end position="224"/>
    </location>
</feature>
<feature type="strand" evidence="10">
    <location>
        <begin position="229"/>
        <end position="232"/>
    </location>
</feature>
<feature type="turn" evidence="10">
    <location>
        <begin position="248"/>
        <end position="250"/>
    </location>
</feature>
<feature type="strand" evidence="10">
    <location>
        <begin position="251"/>
        <end position="257"/>
    </location>
</feature>
<feature type="helix" evidence="10">
    <location>
        <begin position="262"/>
        <end position="264"/>
    </location>
</feature>
<feature type="strand" evidence="10">
    <location>
        <begin position="272"/>
        <end position="278"/>
    </location>
</feature>
<feature type="strand" evidence="10">
    <location>
        <begin position="283"/>
        <end position="287"/>
    </location>
</feature>
<feature type="helix" evidence="10">
    <location>
        <begin position="291"/>
        <end position="293"/>
    </location>
</feature>
<feature type="strand" evidence="10">
    <location>
        <begin position="296"/>
        <end position="310"/>
    </location>
</feature>
<feature type="strand" evidence="10">
    <location>
        <begin position="315"/>
        <end position="319"/>
    </location>
</feature>
<feature type="turn" evidence="10">
    <location>
        <begin position="320"/>
        <end position="323"/>
    </location>
</feature>
<feature type="strand" evidence="10">
    <location>
        <begin position="324"/>
        <end position="329"/>
    </location>
</feature>
<feature type="helix" evidence="10">
    <location>
        <begin position="341"/>
        <end position="343"/>
    </location>
</feature>
<feature type="helix" evidence="10">
    <location>
        <begin position="344"/>
        <end position="356"/>
    </location>
</feature>
<feature type="turn" evidence="10">
    <location>
        <begin position="357"/>
        <end position="361"/>
    </location>
</feature>
<feature type="strand" evidence="10">
    <location>
        <begin position="362"/>
        <end position="368"/>
    </location>
</feature>
<feature type="strand" evidence="10">
    <location>
        <begin position="370"/>
        <end position="374"/>
    </location>
</feature>
<feature type="strand" evidence="10">
    <location>
        <begin position="379"/>
        <end position="387"/>
    </location>
</feature>
<feature type="helix" evidence="10">
    <location>
        <begin position="458"/>
        <end position="498"/>
    </location>
</feature>
<feature type="helix" evidence="10">
    <location>
        <begin position="502"/>
        <end position="510"/>
    </location>
</feature>
<feature type="strand" evidence="10">
    <location>
        <begin position="516"/>
        <end position="519"/>
    </location>
</feature>
<feature type="strand" evidence="10">
    <location>
        <begin position="522"/>
        <end position="525"/>
    </location>
</feature>
<feature type="strand" evidence="10">
    <location>
        <begin position="533"/>
        <end position="538"/>
    </location>
</feature>
<feature type="strand" evidence="10">
    <location>
        <begin position="556"/>
        <end position="560"/>
    </location>
</feature>
<feature type="strand" evidence="10">
    <location>
        <begin position="567"/>
        <end position="572"/>
    </location>
</feature>
<feature type="strand" evidence="10">
    <location>
        <begin position="576"/>
        <end position="579"/>
    </location>
</feature>
<feature type="strand" evidence="10">
    <location>
        <begin position="593"/>
        <end position="598"/>
    </location>
</feature>
<feature type="strand" evidence="10">
    <location>
        <begin position="601"/>
        <end position="606"/>
    </location>
</feature>
<feature type="strand" evidence="10">
    <location>
        <begin position="609"/>
        <end position="615"/>
    </location>
</feature>
<feature type="turn" evidence="10">
    <location>
        <begin position="616"/>
        <end position="618"/>
    </location>
</feature>
<feature type="helix" evidence="10">
    <location>
        <begin position="646"/>
        <end position="650"/>
    </location>
</feature>
<feature type="helix" evidence="10">
    <location>
        <begin position="657"/>
        <end position="673"/>
    </location>
</feature>
<comment type="function">
    <text evidence="2">Envelope glycoprotein that forms spikes at the surface of virion envelope. Essential for the initial attachment to heparan sulfate moieties of the host cell surface proteoglycans. Involved in fusion of viral and cellular membranes leading to virus entry into the host cell. Following initial binding to its host receptors, membrane fusion is mediated by the fusion machinery composed at least of gB and the heterodimer gH/gL. May be involved in the fusion between the virion envelope and the outer nuclear membrane during virion egress.</text>
</comment>
<comment type="subunit">
    <text evidence="2">Homotrimer; disulfide-linked. Binds to heparan sulfate proteoglycans. Interacts with gH/gL heterodimer.</text>
</comment>
<comment type="subcellular location">
    <subcellularLocation>
        <location evidence="2">Virion membrane</location>
        <topology evidence="2">Single-pass type I membrane protein</topology>
    </subcellularLocation>
    <subcellularLocation>
        <location evidence="2">Host cell membrane</location>
        <topology evidence="2">Single-pass type I membrane protein</topology>
    </subcellularLocation>
    <subcellularLocation>
        <location evidence="2">Host endosome membrane</location>
        <topology evidence="2">Single-pass type I membrane protein</topology>
    </subcellularLocation>
    <subcellularLocation>
        <location evidence="2">Host Golgi apparatus membrane</location>
        <topology evidence="2">Single-pass type I membrane protein</topology>
    </subcellularLocation>
    <text evidence="2">During virion morphogenesis, this protein probably accumulates in the endosomes and trans-Golgi where secondary envelopment occurs. It is probably transported to the cell surface from where it is endocytosed and directed to the trans-Golgi network (TGN).</text>
</comment>
<comment type="PTM">
    <text evidence="6 7 8">A proteolytic cleavage by host furin generates two subunits that remain linked by disulfide bonds.</text>
</comment>
<comment type="similarity">
    <text evidence="2">Belongs to the herpesviridae glycoprotein B family.</text>
</comment>
<proteinExistence type="evidence at protein level"/>
<dbReference type="EMBL" id="V01555">
    <property type="protein sequence ID" value="CAA24806.1"/>
    <property type="molecule type" value="Genomic_DNA"/>
</dbReference>
<dbReference type="EMBL" id="AJ507799">
    <property type="protein sequence ID" value="CAD53463.1"/>
    <property type="molecule type" value="Genomic_DNA"/>
</dbReference>
<dbReference type="PIR" id="A03749">
    <property type="entry name" value="QQBE1L"/>
</dbReference>
<dbReference type="RefSeq" id="YP_401713.1">
    <property type="nucleotide sequence ID" value="NC_007605.1"/>
</dbReference>
<dbReference type="PDB" id="3FVC">
    <property type="method" value="X-ray"/>
    <property type="resolution" value="3.20 A"/>
    <property type="chains" value="A=23-685"/>
</dbReference>
<dbReference type="PDBsum" id="3FVC"/>
<dbReference type="SMR" id="P03188"/>
<dbReference type="DIP" id="DIP-47669N"/>
<dbReference type="IntAct" id="P03188">
    <property type="interactions" value="10"/>
</dbReference>
<dbReference type="MINT" id="P03188"/>
<dbReference type="GlyCosmos" id="P03188">
    <property type="glycosylation" value="9 sites, No reported glycans"/>
</dbReference>
<dbReference type="iPTMnet" id="P03188"/>
<dbReference type="DNASU" id="3783680"/>
<dbReference type="GeneID" id="3783680"/>
<dbReference type="KEGG" id="vg:3783680"/>
<dbReference type="EvolutionaryTrace" id="P03188"/>
<dbReference type="Proteomes" id="UP000153037">
    <property type="component" value="Segment"/>
</dbReference>
<dbReference type="GO" id="GO:0044175">
    <property type="term" value="C:host cell endosome membrane"/>
    <property type="evidence" value="ECO:0007669"/>
    <property type="project" value="UniProtKB-SubCell"/>
</dbReference>
<dbReference type="GO" id="GO:0044178">
    <property type="term" value="C:host cell Golgi membrane"/>
    <property type="evidence" value="ECO:0007669"/>
    <property type="project" value="UniProtKB-SubCell"/>
</dbReference>
<dbReference type="GO" id="GO:0020002">
    <property type="term" value="C:host cell plasma membrane"/>
    <property type="evidence" value="ECO:0007669"/>
    <property type="project" value="UniProtKB-SubCell"/>
</dbReference>
<dbReference type="GO" id="GO:0016020">
    <property type="term" value="C:membrane"/>
    <property type="evidence" value="ECO:0007669"/>
    <property type="project" value="UniProtKB-KW"/>
</dbReference>
<dbReference type="GO" id="GO:0019031">
    <property type="term" value="C:viral envelope"/>
    <property type="evidence" value="ECO:0007669"/>
    <property type="project" value="UniProtKB-KW"/>
</dbReference>
<dbReference type="GO" id="GO:0055036">
    <property type="term" value="C:virion membrane"/>
    <property type="evidence" value="ECO:0007669"/>
    <property type="project" value="UniProtKB-SubCell"/>
</dbReference>
<dbReference type="GO" id="GO:0046718">
    <property type="term" value="P:symbiont entry into host cell"/>
    <property type="evidence" value="ECO:0007669"/>
    <property type="project" value="UniProtKB-KW"/>
</dbReference>
<dbReference type="GO" id="GO:0019062">
    <property type="term" value="P:virion attachment to host cell"/>
    <property type="evidence" value="ECO:0007669"/>
    <property type="project" value="UniProtKB-KW"/>
</dbReference>
<dbReference type="Gene3D" id="1.20.5.1890">
    <property type="match status" value="1"/>
</dbReference>
<dbReference type="Gene3D" id="2.30.29.100">
    <property type="match status" value="2"/>
</dbReference>
<dbReference type="Gene3D" id="2.30.30.1230">
    <property type="match status" value="1"/>
</dbReference>
<dbReference type="Gene3D" id="6.10.250.3280">
    <property type="match status" value="1"/>
</dbReference>
<dbReference type="HAMAP" id="MF_04032">
    <property type="entry name" value="HSV_GB"/>
    <property type="match status" value="1"/>
</dbReference>
<dbReference type="InterPro" id="IPR035377">
    <property type="entry name" value="Glycoprot_B_PH1"/>
</dbReference>
<dbReference type="InterPro" id="IPR035381">
    <property type="entry name" value="Glycoprot_B_PH2"/>
</dbReference>
<dbReference type="InterPro" id="IPR038631">
    <property type="entry name" value="Glycoprot_B_PH2_sf"/>
</dbReference>
<dbReference type="InterPro" id="IPR055341">
    <property type="entry name" value="Glycoprotein_B_ecto_C"/>
</dbReference>
<dbReference type="InterPro" id="IPR000234">
    <property type="entry name" value="Herpes_Glycoprot_B"/>
</dbReference>
<dbReference type="Pfam" id="PF17416">
    <property type="entry name" value="Glycoprot_B_PH1"/>
    <property type="match status" value="1"/>
</dbReference>
<dbReference type="Pfam" id="PF17417">
    <property type="entry name" value="Glycoprot_B_PH2"/>
    <property type="match status" value="1"/>
</dbReference>
<dbReference type="Pfam" id="PF00606">
    <property type="entry name" value="Glycoprotein_B"/>
    <property type="match status" value="1"/>
</dbReference>
<dbReference type="SUPFAM" id="SSF161008">
    <property type="entry name" value="Viral glycoprotein ectodomain-like"/>
    <property type="match status" value="1"/>
</dbReference>
<sequence length="857" mass="95639">MTRRRVLSVVVLLAALACRLGAQTPEQPAPPATTVQPTATRQQTSFPFRVCELSSHGDLFRFSSDIQCPSFGTRENHTEGLLMVFKDNIIPYSFKVRSYTKIVTNILIYNGWYADSVTNRHEEKFSVDSYETDQMDTIYQCYNAVKMTKDGLTRVYVDRDGVNITVNLKPTGGLANGVRRYASQTELYDAPGWLIWTYRTRTTVNCLITDMMAKSNSPFDFFVTTTGQTVEMSPFYDGKNKETFHERADSFHVRTNYKIVDYDNRGTNPQGERRAFLDKGTYTLSWKLENRTAYCPLQHWQTFDSTIATETGKSIHFVTDEGTSSFVTNTTVGIELPDAFKCIEEQVNKTMHEKYEAVQDRYTKGQEAITYFITSGGLLLAWLPLTPRSLATVKNLTELTTPTSSPPSSPSPPAPSAARGSTPAAVLRRRRRDAGNATTPVPPTAPGKSLGTLNNPATVQIQFAYDSLRRQINRMLGDLARAWCLEQKRQNMVLRELTKINPTTVMSSIYGKAVAAKRLGDVISVSQCVPVNQATVTLRKSMRVPGSETMCYSRPLVSFSFINDTKTYEGQLGTDNEIFLTKKMTEVCQATSQYYFQSGNEIHVYNDYHHFKTIELDGIATLQTFISLNTSLIENIDFASLELYSRDEQRASNVFDLEGIFREYNFQAQNIAGLRKDLDNAVSNGRNQFVDGLGELMDSLGSVGQSITNLVSTVGGLFSSLVSGFISFFKNPFGGMLILVLVAGVVILVISLTRRTRQMSQQPVQMLYPGIDELAQQHASGEGPGINPISKTELQAIMLALHEQNQEQKRAAQRAAGPSVASRALQAARDRFPGLRRRRYHDPETAAALLGEAETEF</sequence>
<organism>
    <name type="scientific">Epstein-Barr virus (strain B95-8)</name>
    <name type="common">HHV-4</name>
    <name type="synonym">Human herpesvirus 4</name>
    <dbReference type="NCBI Taxonomy" id="10377"/>
    <lineage>
        <taxon>Viruses</taxon>
        <taxon>Duplodnaviria</taxon>
        <taxon>Heunggongvirae</taxon>
        <taxon>Peploviricota</taxon>
        <taxon>Herviviricetes</taxon>
        <taxon>Herpesvirales</taxon>
        <taxon>Orthoherpesviridae</taxon>
        <taxon>Gammaherpesvirinae</taxon>
        <taxon>Lymphocryptovirus</taxon>
        <taxon>Lymphocryptovirus humangamma4</taxon>
        <taxon>Epstein-Barr virus (strain GD1)</taxon>
    </lineage>
</organism>
<protein>
    <recommendedName>
        <fullName evidence="2">Envelope glycoprotein B</fullName>
        <shortName evidence="2">gB</shortName>
    </recommendedName>
</protein>
<evidence type="ECO:0000255" key="1"/>
<evidence type="ECO:0000255" key="2">
    <source>
        <dbReference type="HAMAP-Rule" id="MF_04032"/>
    </source>
</evidence>
<evidence type="ECO:0000256" key="3">
    <source>
        <dbReference type="SAM" id="MobiDB-lite"/>
    </source>
</evidence>
<evidence type="ECO:0000269" key="4">
    <source>
    </source>
</evidence>
<evidence type="ECO:0000269" key="5">
    <source>
    </source>
</evidence>
<evidence type="ECO:0000305" key="6">
    <source>
    </source>
</evidence>
<evidence type="ECO:0000305" key="7">
    <source>
    </source>
</evidence>
<evidence type="ECO:0000305" key="8">
    <source>
    </source>
</evidence>
<evidence type="ECO:0007744" key="9">
    <source>
        <dbReference type="PDB" id="3FVC"/>
    </source>
</evidence>
<evidence type="ECO:0007829" key="10">
    <source>
        <dbReference type="PDB" id="3FVC"/>
    </source>
</evidence>
<name>GB_EBVB9</name>
<reference key="1">
    <citation type="journal article" date="1983" name="Mol. Biol. Med.">
        <title>Sequence analysis of the 17,166 base-pair EcoRI fragment C of B95-8 Epstein-Barr virus.</title>
        <authorList>
            <person name="Bankier A.T."/>
            <person name="Deininger P.L."/>
            <person name="Farrell P.J."/>
            <person name="Barrell B.G."/>
        </authorList>
    </citation>
    <scope>NUCLEOTIDE SEQUENCE [GENOMIC DNA]</scope>
</reference>
<reference key="2">
    <citation type="journal article" date="1984" name="Nature">
        <title>DNA sequence and expression of the B95-8 Epstein-Barr virus genome.</title>
        <authorList>
            <person name="Baer R."/>
            <person name="Bankier A.T."/>
            <person name="Biggin M.D."/>
            <person name="Deininger P.L."/>
            <person name="Farrell P.J."/>
            <person name="Gibson T.J."/>
            <person name="Hatfull G."/>
            <person name="Hudson G.S."/>
            <person name="Satchwell S.C."/>
            <person name="Seguin C."/>
            <person name="Tuffnell P.S."/>
            <person name="Barrell B.G."/>
        </authorList>
    </citation>
    <scope>NUCLEOTIDE SEQUENCE [LARGE SCALE GENOMIC DNA]</scope>
</reference>
<reference key="3">
    <citation type="journal article" date="2003" name="Virology">
        <title>Updated Epstein-Barr virus (EBV) DNA sequence and analysis of a promoter for the BART (CST, BARF0) RNAs of EBV.</title>
        <authorList>
            <person name="de Jesus O."/>
            <person name="Smith P.R."/>
            <person name="Spender L.C."/>
            <person name="Elgueta Karstegl C."/>
            <person name="Niller H.H."/>
            <person name="Huang D."/>
            <person name="Farrell P.J."/>
        </authorList>
    </citation>
    <scope>GENOME REANNOTATION</scope>
</reference>
<reference key="4">
    <citation type="journal article" date="1987" name="J. Virol.">
        <title>Epstein-Barr virus glycoprotein homologous to herpes simplex virus gB.</title>
        <authorList>
            <person name="Gong M."/>
            <person name="Ooka T."/>
            <person name="Matsuo T."/>
            <person name="Kieff E."/>
        </authorList>
    </citation>
    <scope>IDENTIFICATION OF PROTEIN</scope>
</reference>
<reference key="5">
    <citation type="journal article" date="2004" name="Proc. Natl. Acad. Sci. U.S.A.">
        <title>Proteins of purified Epstein-Barr virus.</title>
        <authorList>
            <person name="Johannsen E."/>
            <person name="Luftig M."/>
            <person name="Chase M.R."/>
            <person name="Weicksel S."/>
            <person name="Cahir-McFarland E."/>
            <person name="Illanes D."/>
            <person name="Sarracino D."/>
            <person name="Kieff E."/>
        </authorList>
    </citation>
    <scope>SUBCELLULAR LOCATION</scope>
    <scope>PROTEOLYTIC CLEAVAGE</scope>
</reference>
<reference key="6">
    <citation type="journal article" date="2007" name="Virology">
        <title>Characterization of EBV gB indicates properties of both class I and class II viral fusion proteins.</title>
        <authorList>
            <person name="Backovic M."/>
            <person name="Leser G.P."/>
            <person name="Lamb R.A."/>
            <person name="Longnecker R."/>
            <person name="Jardetzky T.S."/>
        </authorList>
    </citation>
    <scope>MUTAGENESIS OF 112-TRP-TYR-113; 193-TRP--TRP-196 AND 428-ARG--ARG-432</scope>
    <scope>PROTEOLYTIC CLEAVAGE</scope>
</reference>
<reference key="7">
    <citation type="journal article" date="2009" name="J. Virol.">
        <title>Analysis of Epstein-Barr virus glycoprotein B functional domains via linker insertion mutagenesis.</title>
        <authorList>
            <person name="Reimer J.J."/>
            <person name="Backovic M."/>
            <person name="Deshpande C.G."/>
            <person name="Jardetzky T."/>
            <person name="Longnecker R."/>
        </authorList>
    </citation>
    <scope>OLIGOMERIZATION REGION</scope>
</reference>
<reference key="8">
    <citation type="journal article" date="2009" name="J. Gen. Virol.">
        <title>Cleavage of Epstein-Barr virus glycoprotein B is required for full function in cell-cell fusion with both epithelial and B cells.</title>
        <authorList>
            <person name="Sorem J."/>
            <person name="Longnecker R."/>
        </authorList>
    </citation>
    <scope>PROTEOLYTIC CLEAVAGE BY HOST FURIN</scope>
</reference>
<reference key="9">
    <citation type="journal article" date="2009" name="Proc. Natl. Acad. Sci. U.S.A.">
        <title>Structure of a trimeric variant of the Epstein-Barr virus glycoprotein B.</title>
        <authorList>
            <person name="Backovic M."/>
            <person name="Longnecker R."/>
            <person name="Jardetzky T.S."/>
        </authorList>
    </citation>
    <scope>X-RAY CRYSTALLOGRAPHY (3.20 ANGSTROMS) OF 23-685</scope>
    <scope>DISULFIDE BONDS</scope>
    <scope>GLYCOSYLATION AT ASN-163; ASN-290 AND ASN-629</scope>
</reference>
<accession>P03188</accession>
<accession>Q777B0</accession>
<keyword id="KW-0002">3D-structure</keyword>
<keyword id="KW-1015">Disulfide bond</keyword>
<keyword id="KW-0325">Glycoprotein</keyword>
<keyword id="KW-1032">Host cell membrane</keyword>
<keyword id="KW-1039">Host endosome</keyword>
<keyword id="KW-1040">Host Golgi apparatus</keyword>
<keyword id="KW-1043">Host membrane</keyword>
<keyword id="KW-0945">Host-virus interaction</keyword>
<keyword id="KW-0472">Membrane</keyword>
<keyword id="KW-1185">Reference proteome</keyword>
<keyword id="KW-0732">Signal</keyword>
<keyword id="KW-0812">Transmembrane</keyword>
<keyword id="KW-1133">Transmembrane helix</keyword>
<keyword id="KW-1161">Viral attachment to host cell</keyword>
<keyword id="KW-0261">Viral envelope protein</keyword>
<keyword id="KW-0946">Virion</keyword>
<keyword id="KW-1160">Virus entry into host cell</keyword>
<organismHost>
    <name type="scientific">Homo sapiens</name>
    <name type="common">Human</name>
    <dbReference type="NCBI Taxonomy" id="9606"/>
</organismHost>